<organism>
    <name type="scientific">Mycobacterium tuberculosis (strain CDC 1551 / Oshkosh)</name>
    <dbReference type="NCBI Taxonomy" id="83331"/>
    <lineage>
        <taxon>Bacteria</taxon>
        <taxon>Bacillati</taxon>
        <taxon>Actinomycetota</taxon>
        <taxon>Actinomycetes</taxon>
        <taxon>Mycobacteriales</taxon>
        <taxon>Mycobacteriaceae</taxon>
        <taxon>Mycobacterium</taxon>
        <taxon>Mycobacterium tuberculosis complex</taxon>
    </lineage>
</organism>
<accession>P9WJC2</accession>
<accession>L0TFI6</accession>
<accession>O69742</accession>
<accession>Q7D4P1</accession>
<proteinExistence type="inferred from homology"/>
<keyword id="KW-0597">Phosphoprotein</keyword>
<keyword id="KW-1185">Reference proteome</keyword>
<keyword id="KW-0964">Secreted</keyword>
<keyword id="KW-0843">Virulence</keyword>
<feature type="chain" id="PRO_0000427855" description="ESX-1 secretion-associated protein EspJ">
    <location>
        <begin position="1"/>
        <end position="280"/>
    </location>
</feature>
<feature type="region of interest" description="Disordered" evidence="2">
    <location>
        <begin position="167"/>
        <end position="280"/>
    </location>
</feature>
<feature type="compositionally biased region" description="Low complexity" evidence="2">
    <location>
        <begin position="167"/>
        <end position="181"/>
    </location>
</feature>
<feature type="compositionally biased region" description="Low complexity" evidence="2">
    <location>
        <begin position="246"/>
        <end position="280"/>
    </location>
</feature>
<feature type="modified residue" description="Phosphoserine" evidence="1">
    <location>
        <position position="70"/>
    </location>
</feature>
<name>ESPJ_MYCTO</name>
<reference key="1">
    <citation type="journal article" date="2002" name="J. Bacteriol.">
        <title>Whole-genome comparison of Mycobacterium tuberculosis clinical and laboratory strains.</title>
        <authorList>
            <person name="Fleischmann R.D."/>
            <person name="Alland D."/>
            <person name="Eisen J.A."/>
            <person name="Carpenter L."/>
            <person name="White O."/>
            <person name="Peterson J.D."/>
            <person name="DeBoy R.T."/>
            <person name="Dodson R.J."/>
            <person name="Gwinn M.L."/>
            <person name="Haft D.H."/>
            <person name="Hickey E.K."/>
            <person name="Kolonay J.F."/>
            <person name="Nelson W.C."/>
            <person name="Umayam L.A."/>
            <person name="Ermolaeva M.D."/>
            <person name="Salzberg S.L."/>
            <person name="Delcher A."/>
            <person name="Utterback T.R."/>
            <person name="Weidman J.F."/>
            <person name="Khouri H.M."/>
            <person name="Gill J."/>
            <person name="Mikula A."/>
            <person name="Bishai W."/>
            <person name="Jacobs W.R. Jr."/>
            <person name="Venter J.C."/>
            <person name="Fraser C.M."/>
        </authorList>
    </citation>
    <scope>NUCLEOTIDE SEQUENCE [LARGE SCALE GENOMIC DNA]</scope>
    <source>
        <strain>CDC 1551 / Oshkosh</strain>
    </source>
</reference>
<gene>
    <name evidence="1" type="primary">espJ</name>
    <name type="ordered locus">MT3992</name>
</gene>
<evidence type="ECO:0000250" key="1">
    <source>
        <dbReference type="UniProtKB" id="P9WJC3"/>
    </source>
</evidence>
<evidence type="ECO:0000256" key="2">
    <source>
        <dbReference type="SAM" id="MobiDB-lite"/>
    </source>
</evidence>
<comment type="function">
    <text evidence="1">Could be involved in regulation of growth and intracellular survival.</text>
</comment>
<comment type="subcellular location">
    <subcellularLocation>
        <location evidence="1">Secreted</location>
    </subcellularLocation>
</comment>
<comment type="PTM">
    <text evidence="1">Phosphorylated at Ser-70.</text>
</comment>
<protein>
    <recommendedName>
        <fullName evidence="1">ESX-1 secretion-associated protein EspJ</fullName>
    </recommendedName>
    <alternativeName>
        <fullName>TB27.4</fullName>
    </alternativeName>
</protein>
<sequence>MAEPLAVDPTGLSAAAAKLAGLVFPQPPAPIAVSGTDSVVAAINETMPSIESLVSDGLPGVKAALTRTASNMNAAADVYAKTDQSLGTSLSQYAFGSSGEGLAGVASVGGQPSQATQLLSTPVSQVTTQLGETAAELAPRVVAKVPQLVQLAPHAVQMSQNASPIAQTISQTAQQAAQSAQGGSGPMPAQLASAEKPATEQAEPVHEVTNDDQGDQGDVQPAEVVAAARDEGAGASPGQQPGGGVPAQAMDTGAGARPAASPLAAPVDPSTPAPSTTTTL</sequence>
<dbReference type="EMBL" id="AE000516">
    <property type="protein sequence ID" value="AAK48360.1"/>
    <property type="molecule type" value="Genomic_DNA"/>
</dbReference>
<dbReference type="PIR" id="D70803">
    <property type="entry name" value="D70803"/>
</dbReference>
<dbReference type="RefSeq" id="WP_003899742.1">
    <property type="nucleotide sequence ID" value="NZ_KK341228.1"/>
</dbReference>
<dbReference type="RefSeq" id="WP_010924727.1">
    <property type="nucleotide sequence ID" value="NC_002755.2"/>
</dbReference>
<dbReference type="SMR" id="P9WJC2"/>
<dbReference type="KEGG" id="mtc:MT3992"/>
<dbReference type="PATRIC" id="fig|83331.31.peg.4295"/>
<dbReference type="HOGENOM" id="CLU_088215_0_0_11"/>
<dbReference type="Proteomes" id="UP000001020">
    <property type="component" value="Chromosome"/>
</dbReference>
<dbReference type="GO" id="GO:0005576">
    <property type="term" value="C:extracellular region"/>
    <property type="evidence" value="ECO:0007669"/>
    <property type="project" value="UniProtKB-SubCell"/>
</dbReference>